<organism>
    <name type="scientific">Ectopseudomonas mendocina (strain ymp)</name>
    <name type="common">Pseudomonas mendocina</name>
    <dbReference type="NCBI Taxonomy" id="399739"/>
    <lineage>
        <taxon>Bacteria</taxon>
        <taxon>Pseudomonadati</taxon>
        <taxon>Pseudomonadota</taxon>
        <taxon>Gammaproteobacteria</taxon>
        <taxon>Pseudomonadales</taxon>
        <taxon>Pseudomonadaceae</taxon>
        <taxon>Ectopseudomonas</taxon>
    </lineage>
</organism>
<name>SELU_ECTM1</name>
<sequence length="373" mass="41815">MRENCTDYRDLFINDRPMMDARAPVEFHKGAFPGVINLPLMNDIERQKVGTCYKQHGQQAAIELGHQLVSGRTKAERIEAWASFAKANPDGYLYCFRGGLRSQIVQQWLKSEAGIDYPRVIGGYKAMRGFLLETTEQAVAECDFVLVGGMTGTGKTEVLAQLHNAVDLEAHANHRGSSFGKRASGQPAQIDFENALAIDLLKRRAAGQRQFVLEDEARLIGRCSLPLPLYQGMQHYPLVWLEDSLGDRVERILQAYVVELCAEFVAVEGAEAGFAAFAARLRESLANITRRLGGERYQRLAAIMDQALEEQARDGQVDTHRGWIEALLVEYYDPMYVFQRESKAGRIEFAGEQQAVVEYLRQRSGHFPEAPAS</sequence>
<gene>
    <name evidence="1" type="primary">selU</name>
    <name type="ordered locus">Pmen_2454</name>
</gene>
<evidence type="ECO:0000255" key="1">
    <source>
        <dbReference type="HAMAP-Rule" id="MF_01622"/>
    </source>
</evidence>
<reference key="1">
    <citation type="submission" date="2007-04" db="EMBL/GenBank/DDBJ databases">
        <title>Complete sequence of Pseudomonas mendocina ymp.</title>
        <authorList>
            <consortium name="US DOE Joint Genome Institute"/>
            <person name="Copeland A."/>
            <person name="Lucas S."/>
            <person name="Lapidus A."/>
            <person name="Barry K."/>
            <person name="Glavina del Rio T."/>
            <person name="Dalin E."/>
            <person name="Tice H."/>
            <person name="Pitluck S."/>
            <person name="Kiss H."/>
            <person name="Brettin T."/>
            <person name="Detter J.C."/>
            <person name="Bruce D."/>
            <person name="Han C."/>
            <person name="Schmutz J."/>
            <person name="Larimer F."/>
            <person name="Land M."/>
            <person name="Hauser L."/>
            <person name="Kyrpides N."/>
            <person name="Mikhailova N."/>
            <person name="Hersman L."/>
            <person name="Dubois J."/>
            <person name="Maurice P."/>
            <person name="Richardson P."/>
        </authorList>
    </citation>
    <scope>NUCLEOTIDE SEQUENCE [LARGE SCALE GENOMIC DNA]</scope>
    <source>
        <strain>ymp</strain>
    </source>
</reference>
<proteinExistence type="inferred from homology"/>
<protein>
    <recommendedName>
        <fullName evidence="1">tRNA 2-selenouridine synthase</fullName>
        <ecNumber evidence="1">2.9.1.3</ecNumber>
    </recommendedName>
</protein>
<feature type="chain" id="PRO_1000069590" description="tRNA 2-selenouridine synthase">
    <location>
        <begin position="1"/>
        <end position="373"/>
    </location>
</feature>
<feature type="domain" description="Rhodanese" evidence="1">
    <location>
        <begin position="12"/>
        <end position="136"/>
    </location>
</feature>
<feature type="active site" description="S-selanylcysteine intermediate" evidence="1">
    <location>
        <position position="95"/>
    </location>
</feature>
<accession>A4XV44</accession>
<keyword id="KW-0711">Selenium</keyword>
<keyword id="KW-0808">Transferase</keyword>
<comment type="function">
    <text evidence="1">Involved in the post-transcriptional modification of the uridine at the wobble position (U34) of tRNA(Lys), tRNA(Glu) and tRNA(Gln). Catalyzes the conversion of 2-thiouridine (S2U-RNA) to 2-selenouridine (Se2U-RNA). Acts in a two-step process involving geranylation of 2-thiouridine (S2U) to S-geranyl-2-thiouridine (geS2U) and subsequent selenation of the latter derivative to 2-selenouridine (Se2U) in the tRNA chain.</text>
</comment>
<comment type="catalytic activity">
    <reaction evidence="1">
        <text>5-methylaminomethyl-2-thiouridine(34) in tRNA + selenophosphate + (2E)-geranyl diphosphate + H2O + H(+) = 5-methylaminomethyl-2-selenouridine(34) in tRNA + (2E)-thiogeraniol + phosphate + diphosphate</text>
        <dbReference type="Rhea" id="RHEA:42716"/>
        <dbReference type="Rhea" id="RHEA-COMP:10195"/>
        <dbReference type="Rhea" id="RHEA-COMP:10196"/>
        <dbReference type="ChEBI" id="CHEBI:15377"/>
        <dbReference type="ChEBI" id="CHEBI:15378"/>
        <dbReference type="ChEBI" id="CHEBI:16144"/>
        <dbReference type="ChEBI" id="CHEBI:33019"/>
        <dbReference type="ChEBI" id="CHEBI:43474"/>
        <dbReference type="ChEBI" id="CHEBI:58057"/>
        <dbReference type="ChEBI" id="CHEBI:74455"/>
        <dbReference type="ChEBI" id="CHEBI:82743"/>
        <dbReference type="ChEBI" id="CHEBI:143703"/>
        <dbReference type="EC" id="2.9.1.3"/>
    </reaction>
    <physiologicalReaction direction="left-to-right" evidence="1">
        <dbReference type="Rhea" id="RHEA:42717"/>
    </physiologicalReaction>
</comment>
<comment type="catalytic activity">
    <reaction evidence="1">
        <text>5-methylaminomethyl-2-thiouridine(34) in tRNA + (2E)-geranyl diphosphate = 5-methylaminomethyl-S-(2E)-geranyl-thiouridine(34) in tRNA + diphosphate</text>
        <dbReference type="Rhea" id="RHEA:14085"/>
        <dbReference type="Rhea" id="RHEA-COMP:10195"/>
        <dbReference type="Rhea" id="RHEA-COMP:14654"/>
        <dbReference type="ChEBI" id="CHEBI:33019"/>
        <dbReference type="ChEBI" id="CHEBI:58057"/>
        <dbReference type="ChEBI" id="CHEBI:74455"/>
        <dbReference type="ChEBI" id="CHEBI:140632"/>
    </reaction>
    <physiologicalReaction direction="left-to-right" evidence="1">
        <dbReference type="Rhea" id="RHEA:14086"/>
    </physiologicalReaction>
</comment>
<comment type="catalytic activity">
    <reaction evidence="1">
        <text>5-methylaminomethyl-S-(2E)-geranyl-thiouridine(34) in tRNA + selenophosphate + H(+) = 5-methylaminomethyl-2-(Se-phospho)selenouridine(34) in tRNA + (2E)-thiogeraniol</text>
        <dbReference type="Rhea" id="RHEA:60172"/>
        <dbReference type="Rhea" id="RHEA-COMP:14654"/>
        <dbReference type="Rhea" id="RHEA-COMP:15523"/>
        <dbReference type="ChEBI" id="CHEBI:15378"/>
        <dbReference type="ChEBI" id="CHEBI:16144"/>
        <dbReference type="ChEBI" id="CHEBI:140632"/>
        <dbReference type="ChEBI" id="CHEBI:143702"/>
        <dbReference type="ChEBI" id="CHEBI:143703"/>
    </reaction>
    <physiologicalReaction direction="left-to-right" evidence="1">
        <dbReference type="Rhea" id="RHEA:60173"/>
    </physiologicalReaction>
</comment>
<comment type="catalytic activity">
    <reaction evidence="1">
        <text>5-methylaminomethyl-2-(Se-phospho)selenouridine(34) in tRNA + H2O = 5-methylaminomethyl-2-selenouridine(34) in tRNA + phosphate</text>
        <dbReference type="Rhea" id="RHEA:60176"/>
        <dbReference type="Rhea" id="RHEA-COMP:10196"/>
        <dbReference type="Rhea" id="RHEA-COMP:15523"/>
        <dbReference type="ChEBI" id="CHEBI:15377"/>
        <dbReference type="ChEBI" id="CHEBI:43474"/>
        <dbReference type="ChEBI" id="CHEBI:82743"/>
        <dbReference type="ChEBI" id="CHEBI:143702"/>
    </reaction>
    <physiologicalReaction direction="left-to-right" evidence="1">
        <dbReference type="Rhea" id="RHEA:60177"/>
    </physiologicalReaction>
</comment>
<comment type="subunit">
    <text evidence="1">Monomer.</text>
</comment>
<comment type="similarity">
    <text evidence="1">Belongs to the SelU family.</text>
</comment>
<dbReference type="EC" id="2.9.1.3" evidence="1"/>
<dbReference type="EMBL" id="CP000680">
    <property type="protein sequence ID" value="ABP85210.1"/>
    <property type="molecule type" value="Genomic_DNA"/>
</dbReference>
<dbReference type="SMR" id="A4XV44"/>
<dbReference type="STRING" id="399739.Pmen_2454"/>
<dbReference type="KEGG" id="pmy:Pmen_2454"/>
<dbReference type="PATRIC" id="fig|399739.8.peg.2479"/>
<dbReference type="eggNOG" id="COG2603">
    <property type="taxonomic scope" value="Bacteria"/>
</dbReference>
<dbReference type="HOGENOM" id="CLU_043456_1_0_6"/>
<dbReference type="OrthoDB" id="9808735at2"/>
<dbReference type="GO" id="GO:0016765">
    <property type="term" value="F:transferase activity, transferring alkyl or aryl (other than methyl) groups"/>
    <property type="evidence" value="ECO:0007669"/>
    <property type="project" value="UniProtKB-UniRule"/>
</dbReference>
<dbReference type="GO" id="GO:0043828">
    <property type="term" value="F:tRNA 2-selenouridine synthase activity"/>
    <property type="evidence" value="ECO:0007669"/>
    <property type="project" value="UniProtKB-EC"/>
</dbReference>
<dbReference type="GO" id="GO:0002098">
    <property type="term" value="P:tRNA wobble uridine modification"/>
    <property type="evidence" value="ECO:0007669"/>
    <property type="project" value="UniProtKB-UniRule"/>
</dbReference>
<dbReference type="CDD" id="cd01520">
    <property type="entry name" value="RHOD_YbbB"/>
    <property type="match status" value="1"/>
</dbReference>
<dbReference type="Gene3D" id="3.40.250.10">
    <property type="entry name" value="Rhodanese-like domain"/>
    <property type="match status" value="1"/>
</dbReference>
<dbReference type="HAMAP" id="MF_01622">
    <property type="entry name" value="tRNA_sel_U_synth"/>
    <property type="match status" value="1"/>
</dbReference>
<dbReference type="InterPro" id="IPR001763">
    <property type="entry name" value="Rhodanese-like_dom"/>
</dbReference>
<dbReference type="InterPro" id="IPR036873">
    <property type="entry name" value="Rhodanese-like_dom_sf"/>
</dbReference>
<dbReference type="InterPro" id="IPR017582">
    <property type="entry name" value="SelU"/>
</dbReference>
<dbReference type="NCBIfam" id="NF008750">
    <property type="entry name" value="PRK11784.1-2"/>
    <property type="match status" value="1"/>
</dbReference>
<dbReference type="NCBIfam" id="NF008751">
    <property type="entry name" value="PRK11784.1-3"/>
    <property type="match status" value="1"/>
</dbReference>
<dbReference type="NCBIfam" id="TIGR03167">
    <property type="entry name" value="tRNA_sel_U_synt"/>
    <property type="match status" value="1"/>
</dbReference>
<dbReference type="PANTHER" id="PTHR30401">
    <property type="entry name" value="TRNA 2-SELENOURIDINE SYNTHASE"/>
    <property type="match status" value="1"/>
</dbReference>
<dbReference type="PANTHER" id="PTHR30401:SF0">
    <property type="entry name" value="TRNA 2-SELENOURIDINE SYNTHASE"/>
    <property type="match status" value="1"/>
</dbReference>
<dbReference type="SUPFAM" id="SSF52821">
    <property type="entry name" value="Rhodanese/Cell cycle control phosphatase"/>
    <property type="match status" value="1"/>
</dbReference>
<dbReference type="PROSITE" id="PS50206">
    <property type="entry name" value="RHODANESE_3"/>
    <property type="match status" value="1"/>
</dbReference>